<comment type="function">
    <text evidence="1">Bidirectionally degrades single-stranded DNA into large acid-insoluble oligonucleotides, which are then degraded further into small acid-soluble oligonucleotides.</text>
</comment>
<comment type="catalytic activity">
    <reaction evidence="1">
        <text>Exonucleolytic cleavage in either 5'- to 3'- or 3'- to 5'-direction to yield nucleoside 5'-phosphates.</text>
        <dbReference type="EC" id="3.1.11.6"/>
    </reaction>
</comment>
<comment type="subunit">
    <text evidence="1">Heterooligomer composed of large and small subunits.</text>
</comment>
<comment type="subcellular location">
    <subcellularLocation>
        <location evidence="1">Cytoplasm</location>
    </subcellularLocation>
</comment>
<comment type="similarity">
    <text evidence="1">Belongs to the XseB family.</text>
</comment>
<dbReference type="EC" id="3.1.11.6" evidence="1"/>
<dbReference type="EMBL" id="CP000919">
    <property type="protein sequence ID" value="ACO18999.1"/>
    <property type="molecule type" value="Genomic_DNA"/>
</dbReference>
<dbReference type="RefSeq" id="WP_000043230.1">
    <property type="nucleotide sequence ID" value="NC_012466.1"/>
</dbReference>
<dbReference type="SMR" id="C1CEG9"/>
<dbReference type="KEGG" id="sjj:SPJ_1124"/>
<dbReference type="HOGENOM" id="CLU_145918_3_2_9"/>
<dbReference type="Proteomes" id="UP000002206">
    <property type="component" value="Chromosome"/>
</dbReference>
<dbReference type="GO" id="GO:0005829">
    <property type="term" value="C:cytosol"/>
    <property type="evidence" value="ECO:0007669"/>
    <property type="project" value="TreeGrafter"/>
</dbReference>
<dbReference type="GO" id="GO:0009318">
    <property type="term" value="C:exodeoxyribonuclease VII complex"/>
    <property type="evidence" value="ECO:0007669"/>
    <property type="project" value="InterPro"/>
</dbReference>
<dbReference type="GO" id="GO:0008855">
    <property type="term" value="F:exodeoxyribonuclease VII activity"/>
    <property type="evidence" value="ECO:0007669"/>
    <property type="project" value="UniProtKB-UniRule"/>
</dbReference>
<dbReference type="GO" id="GO:0006308">
    <property type="term" value="P:DNA catabolic process"/>
    <property type="evidence" value="ECO:0007669"/>
    <property type="project" value="UniProtKB-UniRule"/>
</dbReference>
<dbReference type="FunFam" id="1.10.287.1040:FF:000003">
    <property type="entry name" value="Exodeoxyribonuclease 7 small subunit"/>
    <property type="match status" value="1"/>
</dbReference>
<dbReference type="Gene3D" id="1.10.287.1040">
    <property type="entry name" value="Exonuclease VII, small subunit"/>
    <property type="match status" value="1"/>
</dbReference>
<dbReference type="HAMAP" id="MF_00337">
    <property type="entry name" value="Exonuc_7_S"/>
    <property type="match status" value="1"/>
</dbReference>
<dbReference type="InterPro" id="IPR003761">
    <property type="entry name" value="Exonuc_VII_S"/>
</dbReference>
<dbReference type="InterPro" id="IPR037004">
    <property type="entry name" value="Exonuc_VII_ssu_sf"/>
</dbReference>
<dbReference type="NCBIfam" id="NF002138">
    <property type="entry name" value="PRK00977.1-2"/>
    <property type="match status" value="1"/>
</dbReference>
<dbReference type="NCBIfam" id="TIGR01280">
    <property type="entry name" value="xseB"/>
    <property type="match status" value="1"/>
</dbReference>
<dbReference type="PANTHER" id="PTHR34137">
    <property type="entry name" value="EXODEOXYRIBONUCLEASE 7 SMALL SUBUNIT"/>
    <property type="match status" value="1"/>
</dbReference>
<dbReference type="PANTHER" id="PTHR34137:SF1">
    <property type="entry name" value="EXODEOXYRIBONUCLEASE 7 SMALL SUBUNIT"/>
    <property type="match status" value="1"/>
</dbReference>
<dbReference type="Pfam" id="PF02609">
    <property type="entry name" value="Exonuc_VII_S"/>
    <property type="match status" value="1"/>
</dbReference>
<dbReference type="PIRSF" id="PIRSF006488">
    <property type="entry name" value="Exonuc_VII_S"/>
    <property type="match status" value="1"/>
</dbReference>
<dbReference type="SUPFAM" id="SSF116842">
    <property type="entry name" value="XseB-like"/>
    <property type="match status" value="1"/>
</dbReference>
<evidence type="ECO:0000255" key="1">
    <source>
        <dbReference type="HAMAP-Rule" id="MF_00337"/>
    </source>
</evidence>
<organism>
    <name type="scientific">Streptococcus pneumoniae (strain JJA)</name>
    <dbReference type="NCBI Taxonomy" id="488222"/>
    <lineage>
        <taxon>Bacteria</taxon>
        <taxon>Bacillati</taxon>
        <taxon>Bacillota</taxon>
        <taxon>Bacilli</taxon>
        <taxon>Lactobacillales</taxon>
        <taxon>Streptococcaceae</taxon>
        <taxon>Streptococcus</taxon>
    </lineage>
</organism>
<proteinExistence type="inferred from homology"/>
<sequence>MSKQKKFEENLAELETIVQSLENGEIALEDAITAFQKGMVLSKELQATLDKAEKTLVKVMQEDGTESDFE</sequence>
<name>EX7S_STRZJ</name>
<reference key="1">
    <citation type="journal article" date="2010" name="Genome Biol.">
        <title>Structure and dynamics of the pan-genome of Streptococcus pneumoniae and closely related species.</title>
        <authorList>
            <person name="Donati C."/>
            <person name="Hiller N.L."/>
            <person name="Tettelin H."/>
            <person name="Muzzi A."/>
            <person name="Croucher N.J."/>
            <person name="Angiuoli S.V."/>
            <person name="Oggioni M."/>
            <person name="Dunning Hotopp J.C."/>
            <person name="Hu F.Z."/>
            <person name="Riley D.R."/>
            <person name="Covacci A."/>
            <person name="Mitchell T.J."/>
            <person name="Bentley S.D."/>
            <person name="Kilian M."/>
            <person name="Ehrlich G.D."/>
            <person name="Rappuoli R."/>
            <person name="Moxon E.R."/>
            <person name="Masignani V."/>
        </authorList>
    </citation>
    <scope>NUCLEOTIDE SEQUENCE [LARGE SCALE GENOMIC DNA]</scope>
    <source>
        <strain>JJA</strain>
    </source>
</reference>
<feature type="chain" id="PRO_1000200263" description="Exodeoxyribonuclease 7 small subunit">
    <location>
        <begin position="1"/>
        <end position="70"/>
    </location>
</feature>
<accession>C1CEG9</accession>
<gene>
    <name evidence="1" type="primary">xseB</name>
    <name type="ordered locus">SPJ_1124</name>
</gene>
<keyword id="KW-0963">Cytoplasm</keyword>
<keyword id="KW-0269">Exonuclease</keyword>
<keyword id="KW-0378">Hydrolase</keyword>
<keyword id="KW-0540">Nuclease</keyword>
<protein>
    <recommendedName>
        <fullName evidence="1">Exodeoxyribonuclease 7 small subunit</fullName>
        <ecNumber evidence="1">3.1.11.6</ecNumber>
    </recommendedName>
    <alternativeName>
        <fullName evidence="1">Exodeoxyribonuclease VII small subunit</fullName>
        <shortName evidence="1">Exonuclease VII small subunit</shortName>
    </alternativeName>
</protein>